<reference key="1">
    <citation type="journal article" date="2006" name="Proc. Natl. Acad. Sci. U.S.A.">
        <title>Genome sequence of Synechococcus CC9311: insights into adaptation to a coastal environment.</title>
        <authorList>
            <person name="Palenik B."/>
            <person name="Ren Q."/>
            <person name="Dupont C.L."/>
            <person name="Myers G.S."/>
            <person name="Heidelberg J.F."/>
            <person name="Badger J.H."/>
            <person name="Madupu R."/>
            <person name="Nelson W.C."/>
            <person name="Brinkac L.M."/>
            <person name="Dodson R.J."/>
            <person name="Durkin A.S."/>
            <person name="Daugherty S.C."/>
            <person name="Sullivan S.A."/>
            <person name="Khouri H."/>
            <person name="Mohamoud Y."/>
            <person name="Halpin R."/>
            <person name="Paulsen I.T."/>
        </authorList>
    </citation>
    <scope>NUCLEOTIDE SEQUENCE [LARGE SCALE GENOMIC DNA]</scope>
    <source>
        <strain>CC9311</strain>
    </source>
</reference>
<proteinExistence type="inferred from homology"/>
<keyword id="KW-0030">Aminoacyl-tRNA synthetase</keyword>
<keyword id="KW-0067">ATP-binding</keyword>
<keyword id="KW-0963">Cytoplasm</keyword>
<keyword id="KW-0436">Ligase</keyword>
<keyword id="KW-0547">Nucleotide-binding</keyword>
<keyword id="KW-0648">Protein biosynthesis</keyword>
<keyword id="KW-1185">Reference proteome</keyword>
<dbReference type="EC" id="6.1.1.4" evidence="1"/>
<dbReference type="EMBL" id="CP000435">
    <property type="protein sequence ID" value="ABI47465.1"/>
    <property type="molecule type" value="Genomic_DNA"/>
</dbReference>
<dbReference type="RefSeq" id="WP_011619300.1">
    <property type="nucleotide sequence ID" value="NC_008319.1"/>
</dbReference>
<dbReference type="SMR" id="Q0IAE0"/>
<dbReference type="STRING" id="64471.sync_1375"/>
<dbReference type="KEGG" id="syg:sync_1375"/>
<dbReference type="eggNOG" id="COG0495">
    <property type="taxonomic scope" value="Bacteria"/>
</dbReference>
<dbReference type="HOGENOM" id="CLU_004427_0_0_3"/>
<dbReference type="OrthoDB" id="9810365at2"/>
<dbReference type="Proteomes" id="UP000001961">
    <property type="component" value="Chromosome"/>
</dbReference>
<dbReference type="GO" id="GO:0005829">
    <property type="term" value="C:cytosol"/>
    <property type="evidence" value="ECO:0007669"/>
    <property type="project" value="TreeGrafter"/>
</dbReference>
<dbReference type="GO" id="GO:0002161">
    <property type="term" value="F:aminoacyl-tRNA deacylase activity"/>
    <property type="evidence" value="ECO:0007669"/>
    <property type="project" value="InterPro"/>
</dbReference>
<dbReference type="GO" id="GO:0005524">
    <property type="term" value="F:ATP binding"/>
    <property type="evidence" value="ECO:0007669"/>
    <property type="project" value="UniProtKB-UniRule"/>
</dbReference>
<dbReference type="GO" id="GO:0004823">
    <property type="term" value="F:leucine-tRNA ligase activity"/>
    <property type="evidence" value="ECO:0007669"/>
    <property type="project" value="UniProtKB-UniRule"/>
</dbReference>
<dbReference type="GO" id="GO:0006429">
    <property type="term" value="P:leucyl-tRNA aminoacylation"/>
    <property type="evidence" value="ECO:0007669"/>
    <property type="project" value="UniProtKB-UniRule"/>
</dbReference>
<dbReference type="CDD" id="cd07958">
    <property type="entry name" value="Anticodon_Ia_Leu_BEm"/>
    <property type="match status" value="1"/>
</dbReference>
<dbReference type="CDD" id="cd00812">
    <property type="entry name" value="LeuRS_core"/>
    <property type="match status" value="1"/>
</dbReference>
<dbReference type="FunFam" id="3.40.50.620:FF:000003">
    <property type="entry name" value="Leucine--tRNA ligase"/>
    <property type="match status" value="1"/>
</dbReference>
<dbReference type="FunFam" id="1.10.730.10:FF:000011">
    <property type="entry name" value="Leucine--tRNA ligase chloroplastic/mitochondrial"/>
    <property type="match status" value="1"/>
</dbReference>
<dbReference type="FunFam" id="3.40.50.620:FF:000100">
    <property type="entry name" value="probable leucine--tRNA ligase, mitochondrial"/>
    <property type="match status" value="1"/>
</dbReference>
<dbReference type="Gene3D" id="3.40.50.620">
    <property type="entry name" value="HUPs"/>
    <property type="match status" value="2"/>
</dbReference>
<dbReference type="Gene3D" id="1.10.730.10">
    <property type="entry name" value="Isoleucyl-tRNA Synthetase, Domain 1"/>
    <property type="match status" value="1"/>
</dbReference>
<dbReference type="HAMAP" id="MF_00049_B">
    <property type="entry name" value="Leu_tRNA_synth_B"/>
    <property type="match status" value="1"/>
</dbReference>
<dbReference type="InterPro" id="IPR001412">
    <property type="entry name" value="aa-tRNA-synth_I_CS"/>
</dbReference>
<dbReference type="InterPro" id="IPR002300">
    <property type="entry name" value="aa-tRNA-synth_Ia"/>
</dbReference>
<dbReference type="InterPro" id="IPR002302">
    <property type="entry name" value="Leu-tRNA-ligase"/>
</dbReference>
<dbReference type="InterPro" id="IPR025709">
    <property type="entry name" value="Leu_tRNA-synth_edit"/>
</dbReference>
<dbReference type="InterPro" id="IPR013155">
    <property type="entry name" value="M/V/L/I-tRNA-synth_anticd-bd"/>
</dbReference>
<dbReference type="InterPro" id="IPR015413">
    <property type="entry name" value="Methionyl/Leucyl_tRNA_Synth"/>
</dbReference>
<dbReference type="InterPro" id="IPR014729">
    <property type="entry name" value="Rossmann-like_a/b/a_fold"/>
</dbReference>
<dbReference type="InterPro" id="IPR009080">
    <property type="entry name" value="tRNAsynth_Ia_anticodon-bd"/>
</dbReference>
<dbReference type="InterPro" id="IPR009008">
    <property type="entry name" value="Val/Leu/Ile-tRNA-synth_edit"/>
</dbReference>
<dbReference type="NCBIfam" id="TIGR00396">
    <property type="entry name" value="leuS_bact"/>
    <property type="match status" value="1"/>
</dbReference>
<dbReference type="PANTHER" id="PTHR43740:SF2">
    <property type="entry name" value="LEUCINE--TRNA LIGASE, MITOCHONDRIAL"/>
    <property type="match status" value="1"/>
</dbReference>
<dbReference type="PANTHER" id="PTHR43740">
    <property type="entry name" value="LEUCYL-TRNA SYNTHETASE"/>
    <property type="match status" value="1"/>
</dbReference>
<dbReference type="Pfam" id="PF08264">
    <property type="entry name" value="Anticodon_1"/>
    <property type="match status" value="1"/>
</dbReference>
<dbReference type="Pfam" id="PF00133">
    <property type="entry name" value="tRNA-synt_1"/>
    <property type="match status" value="2"/>
</dbReference>
<dbReference type="Pfam" id="PF13603">
    <property type="entry name" value="tRNA-synt_1_2"/>
    <property type="match status" value="1"/>
</dbReference>
<dbReference type="Pfam" id="PF09334">
    <property type="entry name" value="tRNA-synt_1g"/>
    <property type="match status" value="1"/>
</dbReference>
<dbReference type="PRINTS" id="PR00985">
    <property type="entry name" value="TRNASYNTHLEU"/>
</dbReference>
<dbReference type="SUPFAM" id="SSF47323">
    <property type="entry name" value="Anticodon-binding domain of a subclass of class I aminoacyl-tRNA synthetases"/>
    <property type="match status" value="1"/>
</dbReference>
<dbReference type="SUPFAM" id="SSF52374">
    <property type="entry name" value="Nucleotidylyl transferase"/>
    <property type="match status" value="1"/>
</dbReference>
<dbReference type="SUPFAM" id="SSF50677">
    <property type="entry name" value="ValRS/IleRS/LeuRS editing domain"/>
    <property type="match status" value="1"/>
</dbReference>
<dbReference type="PROSITE" id="PS00178">
    <property type="entry name" value="AA_TRNA_LIGASE_I"/>
    <property type="match status" value="1"/>
</dbReference>
<protein>
    <recommendedName>
        <fullName evidence="1">Leucine--tRNA ligase</fullName>
        <ecNumber evidence="1">6.1.1.4</ecNumber>
    </recommendedName>
    <alternativeName>
        <fullName evidence="1">Leucyl-tRNA synthetase</fullName>
        <shortName evidence="1">LeuRS</shortName>
    </alternativeName>
</protein>
<sequence>MTAFSSPSSNAASSATDRYQPLALEERWQALWKEQRLYETQDPKPGQRAFYALSMFPYPSGTLHMGHVRNYVITDVIARVQRMRGDAVLHPMGWDAFGLPAENAAIERKIEPGVWTDSNIAQMRGQLGRLGLSIDWDREVATCHSDYYRWTQWLFLELHAGGLAYQKDATVNWDPVDQTVLANEQVDADGRSWRSGALVEKRDLRQWFLRITDYADALLDDLDQLQGWPERVRTMQANWIGRSIGAEIDFQVEAHPGTSITVFTTRPDTLFGVSYLVLAPDHALVDQLTTSEERISVTAFRDLMAELSQDERTSDDQPKRGVPTGAVAINPANGKSIPIWIADYVLADYGTGAVMGVPAHDVRDFSFARQHELPVQRVIEVSGTNEHVNDGEAWAGPGTLIHSAGFSGLSNDEAKTAITNHGAENGWARAKRQYRLRDWLISRQRYWGCPIPIIHCDDCGAVPVPRDQLPVELPTGIDLKGAGGSPLARAEDWVSVTCPKCGKPARRETDTMDTFMCSSWYYLRFADPHNRDLPFNATSVNRWLPVKQYVGGIEHAILHLLYARFFTKALNDRDLLQTKEPFERLLTQGMVQGTTYRNPRTGRYISPAAVKDESNPLDPDDGGPLEVLFEKMSKSKHNGVDPAAVIDRYGADTARMFILFKAPPEKDLEWDDADVEGQFRFLQRLWRLVDSEVNHDGVSPATGESDSDIRRAVHQAIKAVSEDLSDDFQFNTAISELMKLSNSLSSGLAQASPGVRQEAMSALVRLLAPFAPHLAEEFWQRLGGEDSVHCQPWPDHDPEALVLASIEVVIQVKGKVRGSMSVAADCSKEELERLALASDVAQRWLEGKPPRRVIVVPGKLVNLVPSS</sequence>
<name>SYL_SYNS3</name>
<gene>
    <name evidence="1" type="primary">leuS</name>
    <name type="ordered locus">sync_1375</name>
</gene>
<organism>
    <name type="scientific">Synechococcus sp. (strain CC9311)</name>
    <dbReference type="NCBI Taxonomy" id="64471"/>
    <lineage>
        <taxon>Bacteria</taxon>
        <taxon>Bacillati</taxon>
        <taxon>Cyanobacteriota</taxon>
        <taxon>Cyanophyceae</taxon>
        <taxon>Synechococcales</taxon>
        <taxon>Synechococcaceae</taxon>
        <taxon>Synechococcus</taxon>
    </lineage>
</organism>
<accession>Q0IAE0</accession>
<comment type="catalytic activity">
    <reaction evidence="1">
        <text>tRNA(Leu) + L-leucine + ATP = L-leucyl-tRNA(Leu) + AMP + diphosphate</text>
        <dbReference type="Rhea" id="RHEA:11688"/>
        <dbReference type="Rhea" id="RHEA-COMP:9613"/>
        <dbReference type="Rhea" id="RHEA-COMP:9622"/>
        <dbReference type="ChEBI" id="CHEBI:30616"/>
        <dbReference type="ChEBI" id="CHEBI:33019"/>
        <dbReference type="ChEBI" id="CHEBI:57427"/>
        <dbReference type="ChEBI" id="CHEBI:78442"/>
        <dbReference type="ChEBI" id="CHEBI:78494"/>
        <dbReference type="ChEBI" id="CHEBI:456215"/>
        <dbReference type="EC" id="6.1.1.4"/>
    </reaction>
</comment>
<comment type="subcellular location">
    <subcellularLocation>
        <location evidence="1">Cytoplasm</location>
    </subcellularLocation>
</comment>
<comment type="similarity">
    <text evidence="1">Belongs to the class-I aminoacyl-tRNA synthetase family.</text>
</comment>
<feature type="chain" id="PRO_0000334828" description="Leucine--tRNA ligase">
    <location>
        <begin position="1"/>
        <end position="867"/>
    </location>
</feature>
<feature type="region of interest" description="Disordered" evidence="2">
    <location>
        <begin position="308"/>
        <end position="327"/>
    </location>
</feature>
<feature type="short sequence motif" description="'HIGH' region">
    <location>
        <begin position="57"/>
        <end position="67"/>
    </location>
</feature>
<feature type="short sequence motif" description="'KMSKS' region">
    <location>
        <begin position="631"/>
        <end position="635"/>
    </location>
</feature>
<feature type="compositionally biased region" description="Basic and acidic residues" evidence="2">
    <location>
        <begin position="309"/>
        <end position="319"/>
    </location>
</feature>
<feature type="binding site" evidence="1">
    <location>
        <position position="634"/>
    </location>
    <ligand>
        <name>ATP</name>
        <dbReference type="ChEBI" id="CHEBI:30616"/>
    </ligand>
</feature>
<evidence type="ECO:0000255" key="1">
    <source>
        <dbReference type="HAMAP-Rule" id="MF_00049"/>
    </source>
</evidence>
<evidence type="ECO:0000256" key="2">
    <source>
        <dbReference type="SAM" id="MobiDB-lite"/>
    </source>
</evidence>